<keyword id="KW-0027">Amidation</keyword>
<keyword id="KW-0903">Direct protein sequencing</keyword>
<keyword id="KW-0873">Pyrrolidone carboxylic acid</keyword>
<keyword id="KW-1185">Reference proteome</keyword>
<keyword id="KW-0964">Secreted</keyword>
<name>TRH_PIG</name>
<sequence>QHP</sequence>
<dbReference type="SMR" id="P62968"/>
<dbReference type="InParanoid" id="P62968"/>
<dbReference type="Proteomes" id="UP000008227">
    <property type="component" value="Unplaced"/>
</dbReference>
<dbReference type="Proteomes" id="UP000314985">
    <property type="component" value="Unplaced"/>
</dbReference>
<dbReference type="Proteomes" id="UP000694570">
    <property type="component" value="Unplaced"/>
</dbReference>
<dbReference type="Proteomes" id="UP000694571">
    <property type="component" value="Unplaced"/>
</dbReference>
<dbReference type="Proteomes" id="UP000694720">
    <property type="component" value="Unplaced"/>
</dbReference>
<dbReference type="Proteomes" id="UP000694722">
    <property type="component" value="Unplaced"/>
</dbReference>
<dbReference type="Proteomes" id="UP000694723">
    <property type="component" value="Unplaced"/>
</dbReference>
<dbReference type="Proteomes" id="UP000694724">
    <property type="component" value="Unplaced"/>
</dbReference>
<dbReference type="Proteomes" id="UP000694725">
    <property type="component" value="Unplaced"/>
</dbReference>
<dbReference type="Proteomes" id="UP000694726">
    <property type="component" value="Unplaced"/>
</dbReference>
<dbReference type="Proteomes" id="UP000694727">
    <property type="component" value="Unplaced"/>
</dbReference>
<dbReference type="Proteomes" id="UP000694728">
    <property type="component" value="Unplaced"/>
</dbReference>
<dbReference type="GO" id="GO:0005576">
    <property type="term" value="C:extracellular region"/>
    <property type="evidence" value="ECO:0007669"/>
    <property type="project" value="UniProtKB-SubCell"/>
</dbReference>
<reference key="1">
    <citation type="journal article" date="1970" name="Biochemistry">
        <title>Structure of porcine thyrotropin releasing hormone.</title>
        <authorList>
            <person name="Nair R.M.G."/>
            <person name="Barrett J.F."/>
            <person name="Bowers C.Y."/>
            <person name="Schally A.V."/>
        </authorList>
    </citation>
    <scope>PROTEIN SEQUENCE</scope>
    <scope>AMIDATION AT PRO-3</scope>
    <source>
        <tissue>Hypothalamus</tissue>
    </source>
</reference>
<reference key="2">
    <citation type="journal article" date="1969" name="Biochem. Biophys. Res. Commun.">
        <title>The identity of chemical and hormonal properties of the thyrotropin releasing hormone and pyroglutamyl-histidyl-proline amide.</title>
        <authorList>
            <person name="Boler J."/>
            <person name="Enzmann F."/>
            <person name="Folkers K."/>
            <person name="Bowers C.Y."/>
            <person name="Schally A.V."/>
        </authorList>
    </citation>
    <scope>SYNTHESIS</scope>
</reference>
<feature type="peptide" id="PRO_0000044561" description="Thyrotropin-releasing hormone">
    <location>
        <begin position="1"/>
        <end position="3"/>
    </location>
</feature>
<feature type="modified residue" description="Pyrrolidone carboxylic acid" evidence="1">
    <location>
        <position position="1"/>
    </location>
</feature>
<feature type="modified residue" description="Proline amide" evidence="2">
    <location>
        <position position="3"/>
    </location>
</feature>
<gene>
    <name type="primary">TRH</name>
</gene>
<organism>
    <name type="scientific">Sus scrofa</name>
    <name type="common">Pig</name>
    <dbReference type="NCBI Taxonomy" id="9823"/>
    <lineage>
        <taxon>Eukaryota</taxon>
        <taxon>Metazoa</taxon>
        <taxon>Chordata</taxon>
        <taxon>Craniata</taxon>
        <taxon>Vertebrata</taxon>
        <taxon>Euteleostomi</taxon>
        <taxon>Mammalia</taxon>
        <taxon>Eutheria</taxon>
        <taxon>Laurasiatheria</taxon>
        <taxon>Artiodactyla</taxon>
        <taxon>Suina</taxon>
        <taxon>Suidae</taxon>
        <taxon>Sus</taxon>
    </lineage>
</organism>
<accession>P62968</accession>
<accession>P01151</accession>
<evidence type="ECO:0000250" key="1">
    <source>
        <dbReference type="UniProtKB" id="P62969"/>
    </source>
</evidence>
<evidence type="ECO:0000269" key="2">
    <source>
    </source>
</evidence>
<evidence type="ECO:0000305" key="3"/>
<protein>
    <recommendedName>
        <fullName>Thyrotropin-releasing hormone</fullName>
        <shortName>TRH</shortName>
    </recommendedName>
    <alternativeName>
        <fullName>Protirelin</fullName>
    </alternativeName>
    <alternativeName>
        <fullName>TSH-releasing factor</fullName>
    </alternativeName>
    <alternativeName>
        <fullName>Thyroliberin</fullName>
    </alternativeName>
    <alternativeName>
        <fullName>Thyrotropin-releasing factor</fullName>
        <shortName>TRF</shortName>
    </alternativeName>
</protein>
<comment type="function">
    <text>Functions as a regulator of the biosynthesis of TSH in the anterior pituitary gland and as a neurotransmitter/ neuromodulator in the central and peripheral nervous systems.</text>
</comment>
<comment type="subcellular location">
    <subcellularLocation>
        <location>Secreted</location>
    </subcellularLocation>
</comment>
<comment type="similarity">
    <text evidence="3">Belongs to the TRH family.</text>
</comment>
<proteinExistence type="evidence at protein level"/>